<evidence type="ECO:0000250" key="1"/>
<evidence type="ECO:0000250" key="2">
    <source>
        <dbReference type="UniProtKB" id="P03901"/>
    </source>
</evidence>
<evidence type="ECO:0000255" key="3"/>
<evidence type="ECO:0000305" key="4"/>
<keyword id="KW-0249">Electron transport</keyword>
<keyword id="KW-0472">Membrane</keyword>
<keyword id="KW-0496">Mitochondrion</keyword>
<keyword id="KW-0520">NAD</keyword>
<keyword id="KW-0679">Respiratory chain</keyword>
<keyword id="KW-1278">Translocase</keyword>
<keyword id="KW-0812">Transmembrane</keyword>
<keyword id="KW-1133">Transmembrane helix</keyword>
<keyword id="KW-0813">Transport</keyword>
<keyword id="KW-0830">Ubiquinone</keyword>
<feature type="chain" id="PRO_0000118489" description="NADH-ubiquinone oxidoreductase chain 4L">
    <location>
        <begin position="1"/>
        <end position="98"/>
    </location>
</feature>
<feature type="transmembrane region" description="Helical" evidence="3">
    <location>
        <begin position="1"/>
        <end position="21"/>
    </location>
</feature>
<feature type="transmembrane region" description="Helical" evidence="3">
    <location>
        <begin position="26"/>
        <end position="46"/>
    </location>
</feature>
<feature type="transmembrane region" description="Helical" evidence="3">
    <location>
        <begin position="58"/>
        <end position="78"/>
    </location>
</feature>
<proteinExistence type="inferred from homology"/>
<dbReference type="EC" id="7.1.1.2"/>
<dbReference type="EMBL" id="Y16067">
    <property type="protein sequence ID" value="CAA76027.1"/>
    <property type="molecule type" value="Genomic_DNA"/>
</dbReference>
<dbReference type="PIR" id="T11308">
    <property type="entry name" value="T11308"/>
</dbReference>
<dbReference type="RefSeq" id="NP_007622.1">
    <property type="nucleotide sequence ID" value="NC_001950.1"/>
</dbReference>
<dbReference type="SMR" id="O79409"/>
<dbReference type="GeneID" id="808298"/>
<dbReference type="CTD" id="4539"/>
<dbReference type="OrthoDB" id="6146597at2759"/>
<dbReference type="GO" id="GO:0031966">
    <property type="term" value="C:mitochondrial membrane"/>
    <property type="evidence" value="ECO:0007669"/>
    <property type="project" value="UniProtKB-SubCell"/>
</dbReference>
<dbReference type="GO" id="GO:0045271">
    <property type="term" value="C:respiratory chain complex I"/>
    <property type="evidence" value="ECO:0000250"/>
    <property type="project" value="UniProtKB"/>
</dbReference>
<dbReference type="GO" id="GO:0008137">
    <property type="term" value="F:NADH dehydrogenase (ubiquinone) activity"/>
    <property type="evidence" value="ECO:0000250"/>
    <property type="project" value="UniProtKB"/>
</dbReference>
<dbReference type="GO" id="GO:0042773">
    <property type="term" value="P:ATP synthesis coupled electron transport"/>
    <property type="evidence" value="ECO:0007669"/>
    <property type="project" value="InterPro"/>
</dbReference>
<dbReference type="FunFam" id="1.10.287.3510:FF:000002">
    <property type="entry name" value="NADH-ubiquinone oxidoreductase chain 4L"/>
    <property type="match status" value="1"/>
</dbReference>
<dbReference type="Gene3D" id="1.10.287.3510">
    <property type="match status" value="1"/>
</dbReference>
<dbReference type="InterPro" id="IPR001133">
    <property type="entry name" value="NADH_UbQ_OxRdtase_chain4L/K"/>
</dbReference>
<dbReference type="InterPro" id="IPR039428">
    <property type="entry name" value="NUOK/Mnh_C1-like"/>
</dbReference>
<dbReference type="PANTHER" id="PTHR11434:SF0">
    <property type="entry name" value="NADH-UBIQUINONE OXIDOREDUCTASE CHAIN 4L"/>
    <property type="match status" value="1"/>
</dbReference>
<dbReference type="PANTHER" id="PTHR11434">
    <property type="entry name" value="NADH-UBIQUINONE OXIDOREDUCTASE SUBUNIT ND4L"/>
    <property type="match status" value="1"/>
</dbReference>
<dbReference type="Pfam" id="PF00420">
    <property type="entry name" value="Oxidored_q2"/>
    <property type="match status" value="1"/>
</dbReference>
<organism>
    <name type="scientific">Scyliorhinus canicula</name>
    <name type="common">Small-spotted catshark</name>
    <name type="synonym">Squalus canicula</name>
    <dbReference type="NCBI Taxonomy" id="7830"/>
    <lineage>
        <taxon>Eukaryota</taxon>
        <taxon>Metazoa</taxon>
        <taxon>Chordata</taxon>
        <taxon>Craniata</taxon>
        <taxon>Vertebrata</taxon>
        <taxon>Chondrichthyes</taxon>
        <taxon>Elasmobranchii</taxon>
        <taxon>Galeomorphii</taxon>
        <taxon>Galeoidea</taxon>
        <taxon>Carcharhiniformes</taxon>
        <taxon>Scyliorhinidae</taxon>
        <taxon>Scyliorhinus</taxon>
    </lineage>
</organism>
<name>NU4LM_SCYCA</name>
<comment type="function">
    <text evidence="2">Core subunit of the mitochondrial membrane respiratory chain NADH dehydrogenase (Complex I) which catalyzes electron transfer from NADH through the respiratory chain, using ubiquinone as an electron acceptor. Part of the enzyme membrane arm which is embedded in the lipid bilayer and involved in proton translocation.</text>
</comment>
<comment type="catalytic activity">
    <reaction evidence="2">
        <text>a ubiquinone + NADH + 5 H(+)(in) = a ubiquinol + NAD(+) + 4 H(+)(out)</text>
        <dbReference type="Rhea" id="RHEA:29091"/>
        <dbReference type="Rhea" id="RHEA-COMP:9565"/>
        <dbReference type="Rhea" id="RHEA-COMP:9566"/>
        <dbReference type="ChEBI" id="CHEBI:15378"/>
        <dbReference type="ChEBI" id="CHEBI:16389"/>
        <dbReference type="ChEBI" id="CHEBI:17976"/>
        <dbReference type="ChEBI" id="CHEBI:57540"/>
        <dbReference type="ChEBI" id="CHEBI:57945"/>
        <dbReference type="EC" id="7.1.1.2"/>
    </reaction>
    <physiologicalReaction direction="left-to-right" evidence="2">
        <dbReference type="Rhea" id="RHEA:29092"/>
    </physiologicalReaction>
</comment>
<comment type="subcellular location">
    <subcellularLocation>
        <location evidence="1">Mitochondrion membrane</location>
        <topology evidence="1">Multi-pass membrane protein</topology>
    </subcellularLocation>
</comment>
<comment type="similarity">
    <text evidence="4">Belongs to the complex I subunit 4L family.</text>
</comment>
<geneLocation type="mitochondrion"/>
<gene>
    <name type="primary">MT-ND4L</name>
    <name type="synonym">MTND4L</name>
    <name type="synonym">NADH4L</name>
    <name type="synonym">ND4L</name>
</gene>
<sequence>MSPMYFSFSSAFMLGLMGLAFNRSHLLSALLCLEGMMLTLFVATATWSLMLNSTSSSILPMILLTFSACEASAGLAILVATSRSHGSDNLQNLNLLQC</sequence>
<accession>O79409</accession>
<protein>
    <recommendedName>
        <fullName>NADH-ubiquinone oxidoreductase chain 4L</fullName>
        <ecNumber>7.1.1.2</ecNumber>
    </recommendedName>
    <alternativeName>
        <fullName>NADH dehydrogenase subunit 4L</fullName>
    </alternativeName>
</protein>
<reference key="1">
    <citation type="journal article" date="1998" name="Genetics">
        <title>The complete nucleotide sequence of the mitochondrial DNA of the dogfish, Scyliorhinus canicula.</title>
        <authorList>
            <person name="Delarbre C."/>
            <person name="Spruyt N."/>
            <person name="Delmarre C."/>
            <person name="Gallut C."/>
            <person name="Barriel V."/>
            <person name="Janvier P."/>
            <person name="Laudet V."/>
            <person name="Gachelin G."/>
        </authorList>
    </citation>
    <scope>NUCLEOTIDE SEQUENCE [GENOMIC DNA]</scope>
    <source>
        <tissue>Muscle</tissue>
    </source>
</reference>